<gene>
    <name evidence="1" type="primary">panD</name>
    <name type="ordered locus">Sde_1062</name>
</gene>
<keyword id="KW-0068">Autocatalytic cleavage</keyword>
<keyword id="KW-0963">Cytoplasm</keyword>
<keyword id="KW-0210">Decarboxylase</keyword>
<keyword id="KW-0456">Lyase</keyword>
<keyword id="KW-0566">Pantothenate biosynthesis</keyword>
<keyword id="KW-0670">Pyruvate</keyword>
<keyword id="KW-1185">Reference proteome</keyword>
<keyword id="KW-0704">Schiff base</keyword>
<keyword id="KW-0865">Zymogen</keyword>
<protein>
    <recommendedName>
        <fullName evidence="1">Aspartate 1-decarboxylase</fullName>
        <ecNumber evidence="1">4.1.1.11</ecNumber>
    </recommendedName>
    <alternativeName>
        <fullName evidence="1">Aspartate alpha-decarboxylase</fullName>
    </alternativeName>
    <component>
        <recommendedName>
            <fullName evidence="1">Aspartate 1-decarboxylase beta chain</fullName>
        </recommendedName>
    </component>
    <component>
        <recommendedName>
            <fullName evidence="1">Aspartate 1-decarboxylase alpha chain</fullName>
        </recommendedName>
    </component>
</protein>
<sequence length="126" mass="14006">MQITLLKGKLHMAKVTQAELWYDGSCAIDEEFVKLAGLREFEQIEIYNVDNGERFSTYVILAEAGSRTISMNGAAARKVQVGDRVIIAAYSQMSEAEADSFKPRLVYLDKDNAVERTTNTIPVQAA</sequence>
<accession>Q21LV5</accession>
<reference key="1">
    <citation type="journal article" date="2008" name="PLoS Genet.">
        <title>Complete genome sequence of the complex carbohydrate-degrading marine bacterium, Saccharophagus degradans strain 2-40 T.</title>
        <authorList>
            <person name="Weiner R.M."/>
            <person name="Taylor L.E. II"/>
            <person name="Henrissat B."/>
            <person name="Hauser L."/>
            <person name="Land M."/>
            <person name="Coutinho P.M."/>
            <person name="Rancurel C."/>
            <person name="Saunders E.H."/>
            <person name="Longmire A.G."/>
            <person name="Zhang H."/>
            <person name="Bayer E.A."/>
            <person name="Gilbert H.J."/>
            <person name="Larimer F."/>
            <person name="Zhulin I.B."/>
            <person name="Ekborg N.A."/>
            <person name="Lamed R."/>
            <person name="Richardson P.M."/>
            <person name="Borovok I."/>
            <person name="Hutcheson S."/>
        </authorList>
    </citation>
    <scope>NUCLEOTIDE SEQUENCE [LARGE SCALE GENOMIC DNA]</scope>
    <source>
        <strain>2-40 / ATCC 43961 / DSM 17024</strain>
    </source>
</reference>
<feature type="chain" id="PRO_0000307065" description="Aspartate 1-decarboxylase beta chain" evidence="1">
    <location>
        <begin position="1"/>
        <end position="24"/>
    </location>
</feature>
<feature type="chain" id="PRO_0000307066" description="Aspartate 1-decarboxylase alpha chain" evidence="1">
    <location>
        <begin position="25"/>
        <end position="126"/>
    </location>
</feature>
<feature type="active site" description="Schiff-base intermediate with substrate; via pyruvic acid" evidence="1">
    <location>
        <position position="25"/>
    </location>
</feature>
<feature type="active site" description="Proton donor" evidence="1">
    <location>
        <position position="58"/>
    </location>
</feature>
<feature type="binding site" evidence="1">
    <location>
        <position position="57"/>
    </location>
    <ligand>
        <name>substrate</name>
    </ligand>
</feature>
<feature type="binding site" evidence="1">
    <location>
        <begin position="73"/>
        <end position="75"/>
    </location>
    <ligand>
        <name>substrate</name>
    </ligand>
</feature>
<feature type="modified residue" description="Pyruvic acid (Ser)" evidence="1">
    <location>
        <position position="25"/>
    </location>
</feature>
<comment type="function">
    <text evidence="1">Catalyzes the pyruvoyl-dependent decarboxylation of aspartate to produce beta-alanine.</text>
</comment>
<comment type="catalytic activity">
    <reaction evidence="1">
        <text>L-aspartate + H(+) = beta-alanine + CO2</text>
        <dbReference type="Rhea" id="RHEA:19497"/>
        <dbReference type="ChEBI" id="CHEBI:15378"/>
        <dbReference type="ChEBI" id="CHEBI:16526"/>
        <dbReference type="ChEBI" id="CHEBI:29991"/>
        <dbReference type="ChEBI" id="CHEBI:57966"/>
        <dbReference type="EC" id="4.1.1.11"/>
    </reaction>
</comment>
<comment type="cofactor">
    <cofactor evidence="1">
        <name>pyruvate</name>
        <dbReference type="ChEBI" id="CHEBI:15361"/>
    </cofactor>
    <text evidence="1">Binds 1 pyruvoyl group covalently per subunit.</text>
</comment>
<comment type="pathway">
    <text evidence="1">Cofactor biosynthesis; (R)-pantothenate biosynthesis; beta-alanine from L-aspartate: step 1/1.</text>
</comment>
<comment type="subunit">
    <text evidence="1">Heterooctamer of four alpha and four beta subunits.</text>
</comment>
<comment type="subcellular location">
    <subcellularLocation>
        <location evidence="1">Cytoplasm</location>
    </subcellularLocation>
</comment>
<comment type="PTM">
    <text evidence="1">Is synthesized initially as an inactive proenzyme, which is activated by self-cleavage at a specific serine bond to produce a beta-subunit with a hydroxyl group at its C-terminus and an alpha-subunit with a pyruvoyl group at its N-terminus.</text>
</comment>
<comment type="similarity">
    <text evidence="1">Belongs to the PanD family.</text>
</comment>
<name>PAND_SACD2</name>
<evidence type="ECO:0000255" key="1">
    <source>
        <dbReference type="HAMAP-Rule" id="MF_00446"/>
    </source>
</evidence>
<dbReference type="EC" id="4.1.1.11" evidence="1"/>
<dbReference type="EMBL" id="CP000282">
    <property type="protein sequence ID" value="ABD80324.1"/>
    <property type="molecule type" value="Genomic_DNA"/>
</dbReference>
<dbReference type="RefSeq" id="WP_011467544.1">
    <property type="nucleotide sequence ID" value="NC_007912.1"/>
</dbReference>
<dbReference type="SMR" id="Q21LV5"/>
<dbReference type="STRING" id="203122.Sde_1062"/>
<dbReference type="GeneID" id="98612742"/>
<dbReference type="KEGG" id="sde:Sde_1062"/>
<dbReference type="eggNOG" id="COG0853">
    <property type="taxonomic scope" value="Bacteria"/>
</dbReference>
<dbReference type="HOGENOM" id="CLU_115305_2_1_6"/>
<dbReference type="OrthoDB" id="9803983at2"/>
<dbReference type="UniPathway" id="UPA00028">
    <property type="reaction ID" value="UER00002"/>
</dbReference>
<dbReference type="Proteomes" id="UP000001947">
    <property type="component" value="Chromosome"/>
</dbReference>
<dbReference type="GO" id="GO:0005829">
    <property type="term" value="C:cytosol"/>
    <property type="evidence" value="ECO:0007669"/>
    <property type="project" value="TreeGrafter"/>
</dbReference>
<dbReference type="GO" id="GO:0004068">
    <property type="term" value="F:aspartate 1-decarboxylase activity"/>
    <property type="evidence" value="ECO:0007669"/>
    <property type="project" value="UniProtKB-UniRule"/>
</dbReference>
<dbReference type="GO" id="GO:0006523">
    <property type="term" value="P:alanine biosynthetic process"/>
    <property type="evidence" value="ECO:0007669"/>
    <property type="project" value="InterPro"/>
</dbReference>
<dbReference type="GO" id="GO:0015940">
    <property type="term" value="P:pantothenate biosynthetic process"/>
    <property type="evidence" value="ECO:0007669"/>
    <property type="project" value="UniProtKB-UniRule"/>
</dbReference>
<dbReference type="CDD" id="cd06919">
    <property type="entry name" value="Asp_decarbox"/>
    <property type="match status" value="1"/>
</dbReference>
<dbReference type="Gene3D" id="2.40.40.20">
    <property type="match status" value="1"/>
</dbReference>
<dbReference type="HAMAP" id="MF_00446">
    <property type="entry name" value="PanD"/>
    <property type="match status" value="1"/>
</dbReference>
<dbReference type="InterPro" id="IPR009010">
    <property type="entry name" value="Asp_de-COase-like_dom_sf"/>
</dbReference>
<dbReference type="InterPro" id="IPR003190">
    <property type="entry name" value="Asp_decarbox"/>
</dbReference>
<dbReference type="NCBIfam" id="TIGR00223">
    <property type="entry name" value="panD"/>
    <property type="match status" value="1"/>
</dbReference>
<dbReference type="PANTHER" id="PTHR21012">
    <property type="entry name" value="ASPARTATE 1-DECARBOXYLASE"/>
    <property type="match status" value="1"/>
</dbReference>
<dbReference type="PANTHER" id="PTHR21012:SF0">
    <property type="entry name" value="ASPARTATE 1-DECARBOXYLASE"/>
    <property type="match status" value="1"/>
</dbReference>
<dbReference type="Pfam" id="PF02261">
    <property type="entry name" value="Asp_decarbox"/>
    <property type="match status" value="1"/>
</dbReference>
<dbReference type="PIRSF" id="PIRSF006246">
    <property type="entry name" value="Asp_decarbox"/>
    <property type="match status" value="1"/>
</dbReference>
<dbReference type="SUPFAM" id="SSF50692">
    <property type="entry name" value="ADC-like"/>
    <property type="match status" value="1"/>
</dbReference>
<proteinExistence type="inferred from homology"/>
<organism>
    <name type="scientific">Saccharophagus degradans (strain 2-40 / ATCC 43961 / DSM 17024)</name>
    <dbReference type="NCBI Taxonomy" id="203122"/>
    <lineage>
        <taxon>Bacteria</taxon>
        <taxon>Pseudomonadati</taxon>
        <taxon>Pseudomonadota</taxon>
        <taxon>Gammaproteobacteria</taxon>
        <taxon>Cellvibrionales</taxon>
        <taxon>Cellvibrionaceae</taxon>
        <taxon>Saccharophagus</taxon>
    </lineage>
</organism>